<name>PYRG_MYCBT</name>
<organism>
    <name type="scientific">Mycobacterium bovis (strain BCG / Tokyo 172 / ATCC 35737 / TMC 1019)</name>
    <dbReference type="NCBI Taxonomy" id="561275"/>
    <lineage>
        <taxon>Bacteria</taxon>
        <taxon>Bacillati</taxon>
        <taxon>Actinomycetota</taxon>
        <taxon>Actinomycetes</taxon>
        <taxon>Mycobacteriales</taxon>
        <taxon>Mycobacteriaceae</taxon>
        <taxon>Mycobacterium</taxon>
        <taxon>Mycobacterium tuberculosis complex</taxon>
    </lineage>
</organism>
<evidence type="ECO:0000255" key="1">
    <source>
        <dbReference type="HAMAP-Rule" id="MF_01227"/>
    </source>
</evidence>
<evidence type="ECO:0000256" key="2">
    <source>
        <dbReference type="SAM" id="MobiDB-lite"/>
    </source>
</evidence>
<reference key="1">
    <citation type="journal article" date="2009" name="Vaccine">
        <title>Whole genome sequence analysis of Mycobacterium bovis bacillus Calmette-Guerin (BCG) Tokyo 172: a comparative study of BCG vaccine substrains.</title>
        <authorList>
            <person name="Seki M."/>
            <person name="Honda I."/>
            <person name="Fujita I."/>
            <person name="Yano I."/>
            <person name="Yamamoto S."/>
            <person name="Koyama A."/>
        </authorList>
    </citation>
    <scope>NUCLEOTIDE SEQUENCE [LARGE SCALE GENOMIC DNA]</scope>
    <source>
        <strain>BCG / Tokyo 172 / ATCC 35737 / TMC 1019</strain>
    </source>
</reference>
<proteinExistence type="inferred from homology"/>
<dbReference type="EC" id="6.3.4.2" evidence="1"/>
<dbReference type="EMBL" id="AP010918">
    <property type="protein sequence ID" value="BAH26000.1"/>
    <property type="molecule type" value="Genomic_DNA"/>
</dbReference>
<dbReference type="RefSeq" id="WP_003408396.1">
    <property type="nucleotide sequence ID" value="NZ_CP014566.1"/>
</dbReference>
<dbReference type="SMR" id="C1ANX1"/>
<dbReference type="MEROPS" id="C26.964"/>
<dbReference type="KEGG" id="mbt:JTY_1712"/>
<dbReference type="HOGENOM" id="CLU_011675_5_0_11"/>
<dbReference type="UniPathway" id="UPA00159">
    <property type="reaction ID" value="UER00277"/>
</dbReference>
<dbReference type="GO" id="GO:0005829">
    <property type="term" value="C:cytosol"/>
    <property type="evidence" value="ECO:0007669"/>
    <property type="project" value="TreeGrafter"/>
</dbReference>
<dbReference type="GO" id="GO:0005524">
    <property type="term" value="F:ATP binding"/>
    <property type="evidence" value="ECO:0007669"/>
    <property type="project" value="UniProtKB-KW"/>
</dbReference>
<dbReference type="GO" id="GO:0003883">
    <property type="term" value="F:CTP synthase activity"/>
    <property type="evidence" value="ECO:0007669"/>
    <property type="project" value="UniProtKB-UniRule"/>
</dbReference>
<dbReference type="GO" id="GO:0004359">
    <property type="term" value="F:glutaminase activity"/>
    <property type="evidence" value="ECO:0007669"/>
    <property type="project" value="RHEA"/>
</dbReference>
<dbReference type="GO" id="GO:0042802">
    <property type="term" value="F:identical protein binding"/>
    <property type="evidence" value="ECO:0007669"/>
    <property type="project" value="TreeGrafter"/>
</dbReference>
<dbReference type="GO" id="GO:0046872">
    <property type="term" value="F:metal ion binding"/>
    <property type="evidence" value="ECO:0007669"/>
    <property type="project" value="UniProtKB-KW"/>
</dbReference>
<dbReference type="GO" id="GO:0044210">
    <property type="term" value="P:'de novo' CTP biosynthetic process"/>
    <property type="evidence" value="ECO:0007669"/>
    <property type="project" value="UniProtKB-UniRule"/>
</dbReference>
<dbReference type="GO" id="GO:0019856">
    <property type="term" value="P:pyrimidine nucleobase biosynthetic process"/>
    <property type="evidence" value="ECO:0007669"/>
    <property type="project" value="TreeGrafter"/>
</dbReference>
<dbReference type="CDD" id="cd03113">
    <property type="entry name" value="CTPS_N"/>
    <property type="match status" value="1"/>
</dbReference>
<dbReference type="CDD" id="cd01746">
    <property type="entry name" value="GATase1_CTP_Synthase"/>
    <property type="match status" value="1"/>
</dbReference>
<dbReference type="FunFam" id="3.40.50.300:FF:000009">
    <property type="entry name" value="CTP synthase"/>
    <property type="match status" value="1"/>
</dbReference>
<dbReference type="FunFam" id="3.40.50.880:FF:000002">
    <property type="entry name" value="CTP synthase"/>
    <property type="match status" value="1"/>
</dbReference>
<dbReference type="Gene3D" id="3.40.50.880">
    <property type="match status" value="1"/>
</dbReference>
<dbReference type="Gene3D" id="3.40.50.300">
    <property type="entry name" value="P-loop containing nucleotide triphosphate hydrolases"/>
    <property type="match status" value="1"/>
</dbReference>
<dbReference type="HAMAP" id="MF_01227">
    <property type="entry name" value="PyrG"/>
    <property type="match status" value="1"/>
</dbReference>
<dbReference type="InterPro" id="IPR029062">
    <property type="entry name" value="Class_I_gatase-like"/>
</dbReference>
<dbReference type="InterPro" id="IPR004468">
    <property type="entry name" value="CTP_synthase"/>
</dbReference>
<dbReference type="InterPro" id="IPR017456">
    <property type="entry name" value="CTP_synthase_N"/>
</dbReference>
<dbReference type="InterPro" id="IPR017926">
    <property type="entry name" value="GATASE"/>
</dbReference>
<dbReference type="InterPro" id="IPR033828">
    <property type="entry name" value="GATase1_CTP_Synthase"/>
</dbReference>
<dbReference type="InterPro" id="IPR027417">
    <property type="entry name" value="P-loop_NTPase"/>
</dbReference>
<dbReference type="NCBIfam" id="NF003792">
    <property type="entry name" value="PRK05380.1"/>
    <property type="match status" value="1"/>
</dbReference>
<dbReference type="NCBIfam" id="TIGR00337">
    <property type="entry name" value="PyrG"/>
    <property type="match status" value="1"/>
</dbReference>
<dbReference type="PANTHER" id="PTHR11550">
    <property type="entry name" value="CTP SYNTHASE"/>
    <property type="match status" value="1"/>
</dbReference>
<dbReference type="PANTHER" id="PTHR11550:SF0">
    <property type="entry name" value="CTP SYNTHASE-RELATED"/>
    <property type="match status" value="1"/>
</dbReference>
<dbReference type="Pfam" id="PF06418">
    <property type="entry name" value="CTP_synth_N"/>
    <property type="match status" value="1"/>
</dbReference>
<dbReference type="Pfam" id="PF00117">
    <property type="entry name" value="GATase"/>
    <property type="match status" value="1"/>
</dbReference>
<dbReference type="SUPFAM" id="SSF52317">
    <property type="entry name" value="Class I glutamine amidotransferase-like"/>
    <property type="match status" value="1"/>
</dbReference>
<dbReference type="SUPFAM" id="SSF52540">
    <property type="entry name" value="P-loop containing nucleoside triphosphate hydrolases"/>
    <property type="match status" value="1"/>
</dbReference>
<dbReference type="PROSITE" id="PS51273">
    <property type="entry name" value="GATASE_TYPE_1"/>
    <property type="match status" value="1"/>
</dbReference>
<gene>
    <name evidence="1" type="primary">pyrG</name>
    <name type="ordered locus">JTY_1712</name>
</gene>
<keyword id="KW-0067">ATP-binding</keyword>
<keyword id="KW-0315">Glutamine amidotransferase</keyword>
<keyword id="KW-0436">Ligase</keyword>
<keyword id="KW-0460">Magnesium</keyword>
<keyword id="KW-0479">Metal-binding</keyword>
<keyword id="KW-0547">Nucleotide-binding</keyword>
<keyword id="KW-0665">Pyrimidine biosynthesis</keyword>
<sequence>MRKHPQTATKHLFVSGGVASSLGKGLTASSLGQLLTARGLHVTMQKLDPYLNVDPGTMNPFQHGEVFVTEDGAETDLDVGHYERFLDRNLPGSANVTTGQVYSTVIAKERRGEYLGDTVQVIPHITDEIKRRILAMAQPDADGNRPDVVITEIGGTVGDIESQPFLEAARQVRHYLGREDVFFLHVSLVPYLAPSGELKTKPTQHSVAALRSIGITPDALILRCDRDVPEALKNKIALMCDVDIDGVISTPDAPSIYDIPKVLHREELDAFVVRRLNLPFRDVDWTEWDDLLRRVHEPHETVRIALVGKYVELSDAYLSVAEALRAGGFKHRAKVEICWVASDGCETTSGAAAALGDVHGVLIPGGFGIRGIEGKIGAIAYARARGLPVLGLCLGLQCIVIEAARSVGLTNANSAEFDPDTPDPVIATMPDQEEIVAGEADLGGTMRLGSYPAVLEPDSVVAQAYQTTQVSERHRHRYEVNNAYRDKIAESGLRFSGTSPDGHLVEFVEYPPDRHPFVVGTQAHPELKSRPTRPHPLFVAFVGAAIDYKAGELLPVEIPEIPEHTPNGSSHRDGVGQPLPEPASRG</sequence>
<accession>C1ANX1</accession>
<protein>
    <recommendedName>
        <fullName evidence="1">CTP synthase</fullName>
        <ecNumber evidence="1">6.3.4.2</ecNumber>
    </recommendedName>
    <alternativeName>
        <fullName evidence="1">Cytidine 5'-triphosphate synthase</fullName>
    </alternativeName>
    <alternativeName>
        <fullName evidence="1">Cytidine triphosphate synthetase</fullName>
        <shortName evidence="1">CTP synthetase</shortName>
        <shortName evidence="1">CTPS</shortName>
    </alternativeName>
    <alternativeName>
        <fullName evidence="1">UTP--ammonia ligase</fullName>
    </alternativeName>
</protein>
<comment type="function">
    <text evidence="1">Catalyzes the ATP-dependent amination of UTP to CTP with either L-glutamine or ammonia as the source of nitrogen. Regulates intracellular CTP levels through interactions with the four ribonucleotide triphosphates.</text>
</comment>
<comment type="catalytic activity">
    <reaction evidence="1">
        <text>UTP + L-glutamine + ATP + H2O = CTP + L-glutamate + ADP + phosphate + 2 H(+)</text>
        <dbReference type="Rhea" id="RHEA:26426"/>
        <dbReference type="ChEBI" id="CHEBI:15377"/>
        <dbReference type="ChEBI" id="CHEBI:15378"/>
        <dbReference type="ChEBI" id="CHEBI:29985"/>
        <dbReference type="ChEBI" id="CHEBI:30616"/>
        <dbReference type="ChEBI" id="CHEBI:37563"/>
        <dbReference type="ChEBI" id="CHEBI:43474"/>
        <dbReference type="ChEBI" id="CHEBI:46398"/>
        <dbReference type="ChEBI" id="CHEBI:58359"/>
        <dbReference type="ChEBI" id="CHEBI:456216"/>
        <dbReference type="EC" id="6.3.4.2"/>
    </reaction>
</comment>
<comment type="catalytic activity">
    <reaction evidence="1">
        <text>L-glutamine + H2O = L-glutamate + NH4(+)</text>
        <dbReference type="Rhea" id="RHEA:15889"/>
        <dbReference type="ChEBI" id="CHEBI:15377"/>
        <dbReference type="ChEBI" id="CHEBI:28938"/>
        <dbReference type="ChEBI" id="CHEBI:29985"/>
        <dbReference type="ChEBI" id="CHEBI:58359"/>
    </reaction>
</comment>
<comment type="catalytic activity">
    <reaction evidence="1">
        <text>UTP + NH4(+) + ATP = CTP + ADP + phosphate + 2 H(+)</text>
        <dbReference type="Rhea" id="RHEA:16597"/>
        <dbReference type="ChEBI" id="CHEBI:15378"/>
        <dbReference type="ChEBI" id="CHEBI:28938"/>
        <dbReference type="ChEBI" id="CHEBI:30616"/>
        <dbReference type="ChEBI" id="CHEBI:37563"/>
        <dbReference type="ChEBI" id="CHEBI:43474"/>
        <dbReference type="ChEBI" id="CHEBI:46398"/>
        <dbReference type="ChEBI" id="CHEBI:456216"/>
    </reaction>
</comment>
<comment type="activity regulation">
    <text evidence="1">Allosterically activated by GTP, when glutamine is the substrate; GTP has no effect on the reaction when ammonia is the substrate. The allosteric effector GTP functions by stabilizing the protein conformation that binds the tetrahedral intermediate(s) formed during glutamine hydrolysis. Inhibited by the product CTP, via allosteric rather than competitive inhibition.</text>
</comment>
<comment type="pathway">
    <text evidence="1">Pyrimidine metabolism; CTP biosynthesis via de novo pathway; CTP from UDP: step 2/2.</text>
</comment>
<comment type="subunit">
    <text evidence="1">Homotetramer.</text>
</comment>
<comment type="miscellaneous">
    <text evidence="1">CTPSs have evolved a hybrid strategy for distinguishing between UTP and CTP. The overlapping regions of the product feedback inhibitory and substrate sites recognize a common feature in both compounds, the triphosphate moiety. To differentiate isosteric substrate and product pyrimidine rings, an additional pocket far from the expected kinase/ligase catalytic site, specifically recognizes the cytosine and ribose portions of the product inhibitor.</text>
</comment>
<comment type="similarity">
    <text evidence="1">Belongs to the CTP synthase family.</text>
</comment>
<feature type="chain" id="PRO_1000164952" description="CTP synthase">
    <location>
        <begin position="1"/>
        <end position="586"/>
    </location>
</feature>
<feature type="domain" description="Glutamine amidotransferase type-1" evidence="1">
    <location>
        <begin position="303"/>
        <end position="551"/>
    </location>
</feature>
<feature type="region of interest" description="Amidoligase domain" evidence="1">
    <location>
        <begin position="1"/>
        <end position="278"/>
    </location>
</feature>
<feature type="region of interest" description="Disordered" evidence="2">
    <location>
        <begin position="560"/>
        <end position="586"/>
    </location>
</feature>
<feature type="active site" description="Nucleophile; for glutamine hydrolysis" evidence="1">
    <location>
        <position position="393"/>
    </location>
</feature>
<feature type="active site" evidence="1">
    <location>
        <position position="524"/>
    </location>
</feature>
<feature type="active site" evidence="1">
    <location>
        <position position="526"/>
    </location>
</feature>
<feature type="binding site" evidence="1">
    <location>
        <position position="20"/>
    </location>
    <ligand>
        <name>CTP</name>
        <dbReference type="ChEBI" id="CHEBI:37563"/>
        <note>allosteric inhibitor</note>
    </ligand>
</feature>
<feature type="binding site" evidence="1">
    <location>
        <position position="20"/>
    </location>
    <ligand>
        <name>UTP</name>
        <dbReference type="ChEBI" id="CHEBI:46398"/>
    </ligand>
</feature>
<feature type="binding site" evidence="1">
    <location>
        <begin position="21"/>
        <end position="26"/>
    </location>
    <ligand>
        <name>ATP</name>
        <dbReference type="ChEBI" id="CHEBI:30616"/>
    </ligand>
</feature>
<feature type="binding site" evidence="1">
    <location>
        <position position="78"/>
    </location>
    <ligand>
        <name>ATP</name>
        <dbReference type="ChEBI" id="CHEBI:30616"/>
    </ligand>
</feature>
<feature type="binding site" evidence="1">
    <location>
        <position position="78"/>
    </location>
    <ligand>
        <name>Mg(2+)</name>
        <dbReference type="ChEBI" id="CHEBI:18420"/>
    </ligand>
</feature>
<feature type="binding site" evidence="1">
    <location>
        <position position="152"/>
    </location>
    <ligand>
        <name>Mg(2+)</name>
        <dbReference type="ChEBI" id="CHEBI:18420"/>
    </ligand>
</feature>
<feature type="binding site" evidence="1">
    <location>
        <begin position="159"/>
        <end position="161"/>
    </location>
    <ligand>
        <name>CTP</name>
        <dbReference type="ChEBI" id="CHEBI:37563"/>
        <note>allosteric inhibitor</note>
    </ligand>
</feature>
<feature type="binding site" evidence="1">
    <location>
        <begin position="199"/>
        <end position="204"/>
    </location>
    <ligand>
        <name>CTP</name>
        <dbReference type="ChEBI" id="CHEBI:37563"/>
        <note>allosteric inhibitor</note>
    </ligand>
</feature>
<feature type="binding site" evidence="1">
    <location>
        <begin position="199"/>
        <end position="204"/>
    </location>
    <ligand>
        <name>UTP</name>
        <dbReference type="ChEBI" id="CHEBI:46398"/>
    </ligand>
</feature>
<feature type="binding site" evidence="1">
    <location>
        <position position="235"/>
    </location>
    <ligand>
        <name>CTP</name>
        <dbReference type="ChEBI" id="CHEBI:37563"/>
        <note>allosteric inhibitor</note>
    </ligand>
</feature>
<feature type="binding site" evidence="1">
    <location>
        <position position="235"/>
    </location>
    <ligand>
        <name>UTP</name>
        <dbReference type="ChEBI" id="CHEBI:46398"/>
    </ligand>
</feature>
<feature type="binding site" evidence="1">
    <location>
        <position position="366"/>
    </location>
    <ligand>
        <name>L-glutamine</name>
        <dbReference type="ChEBI" id="CHEBI:58359"/>
    </ligand>
</feature>
<feature type="binding site" evidence="1">
    <location>
        <begin position="394"/>
        <end position="397"/>
    </location>
    <ligand>
        <name>L-glutamine</name>
        <dbReference type="ChEBI" id="CHEBI:58359"/>
    </ligand>
</feature>
<feature type="binding site" evidence="1">
    <location>
        <position position="416"/>
    </location>
    <ligand>
        <name>L-glutamine</name>
        <dbReference type="ChEBI" id="CHEBI:58359"/>
    </ligand>
</feature>
<feature type="binding site" evidence="1">
    <location>
        <position position="477"/>
    </location>
    <ligand>
        <name>L-glutamine</name>
        <dbReference type="ChEBI" id="CHEBI:58359"/>
    </ligand>
</feature>